<accession>Q1MRF2</accession>
<evidence type="ECO:0000255" key="1">
    <source>
        <dbReference type="HAMAP-Rule" id="MF_01445"/>
    </source>
</evidence>
<feature type="chain" id="PRO_0000303402" description="tRNA N6-adenosine threonylcarbamoyltransferase">
    <location>
        <begin position="1"/>
        <end position="355"/>
    </location>
</feature>
<feature type="binding site" evidence="1">
    <location>
        <position position="110"/>
    </location>
    <ligand>
        <name>Fe cation</name>
        <dbReference type="ChEBI" id="CHEBI:24875"/>
    </ligand>
</feature>
<feature type="binding site" evidence="1">
    <location>
        <position position="114"/>
    </location>
    <ligand>
        <name>Fe cation</name>
        <dbReference type="ChEBI" id="CHEBI:24875"/>
    </ligand>
</feature>
<feature type="binding site" evidence="1">
    <location>
        <begin position="132"/>
        <end position="136"/>
    </location>
    <ligand>
        <name>substrate</name>
    </ligand>
</feature>
<feature type="binding site" evidence="1">
    <location>
        <position position="165"/>
    </location>
    <ligand>
        <name>substrate</name>
    </ligand>
</feature>
<feature type="binding site" evidence="1">
    <location>
        <position position="178"/>
    </location>
    <ligand>
        <name>substrate</name>
    </ligand>
</feature>
<feature type="binding site" evidence="1">
    <location>
        <position position="182"/>
    </location>
    <ligand>
        <name>substrate</name>
    </ligand>
</feature>
<feature type="binding site" evidence="1">
    <location>
        <position position="288"/>
    </location>
    <ligand>
        <name>substrate</name>
    </ligand>
</feature>
<feature type="binding site" evidence="1">
    <location>
        <position position="316"/>
    </location>
    <ligand>
        <name>Fe cation</name>
        <dbReference type="ChEBI" id="CHEBI:24875"/>
    </ligand>
</feature>
<organism>
    <name type="scientific">Lawsonia intracellularis (strain PHE/MN1-00)</name>
    <dbReference type="NCBI Taxonomy" id="363253"/>
    <lineage>
        <taxon>Bacteria</taxon>
        <taxon>Pseudomonadati</taxon>
        <taxon>Thermodesulfobacteriota</taxon>
        <taxon>Desulfovibrionia</taxon>
        <taxon>Desulfovibrionales</taxon>
        <taxon>Desulfovibrionaceae</taxon>
        <taxon>Lawsonia</taxon>
    </lineage>
</organism>
<reference key="1">
    <citation type="submission" date="2005-11" db="EMBL/GenBank/DDBJ databases">
        <title>The complete genome sequence of Lawsonia intracellularis: the causative agent of proliferative enteropathy.</title>
        <authorList>
            <person name="Kaur K."/>
            <person name="Zhang Q."/>
            <person name="Beckler D."/>
            <person name="Munir S."/>
            <person name="Li L."/>
            <person name="Kinsley K."/>
            <person name="Herron L."/>
            <person name="Peterson A."/>
            <person name="May B."/>
            <person name="Singh S."/>
            <person name="Gebhart C."/>
            <person name="Kapur V."/>
        </authorList>
    </citation>
    <scope>NUCLEOTIDE SEQUENCE [LARGE SCALE GENOMIC DNA]</scope>
    <source>
        <strain>PHE/MN1-00</strain>
    </source>
</reference>
<proteinExistence type="inferred from homology"/>
<name>TSAD_LAWIP</name>
<protein>
    <recommendedName>
        <fullName evidence="1">tRNA N6-adenosine threonylcarbamoyltransferase</fullName>
        <ecNumber evidence="1">2.3.1.234</ecNumber>
    </recommendedName>
    <alternativeName>
        <fullName evidence="1">N6-L-threonylcarbamoyladenine synthase</fullName>
        <shortName evidence="1">t(6)A synthase</shortName>
    </alternativeName>
    <alternativeName>
        <fullName evidence="1">t(6)A37 threonylcarbamoyladenosine biosynthesis protein TsaD</fullName>
    </alternativeName>
    <alternativeName>
        <fullName evidence="1">tRNA threonylcarbamoyladenosine biosynthesis protein TsaD</fullName>
    </alternativeName>
</protein>
<gene>
    <name evidence="1" type="primary">tsaD</name>
    <name type="synonym">gcp</name>
    <name type="ordered locus">LI0368</name>
</gene>
<comment type="function">
    <text evidence="1">Required for the formation of a threonylcarbamoyl group on adenosine at position 37 (t(6)A37) in tRNAs that read codons beginning with adenine. Is involved in the transfer of the threonylcarbamoyl moiety of threonylcarbamoyl-AMP (TC-AMP) to the N6 group of A37, together with TsaE and TsaB. TsaD likely plays a direct catalytic role in this reaction.</text>
</comment>
<comment type="catalytic activity">
    <reaction evidence="1">
        <text>L-threonylcarbamoyladenylate + adenosine(37) in tRNA = N(6)-L-threonylcarbamoyladenosine(37) in tRNA + AMP + H(+)</text>
        <dbReference type="Rhea" id="RHEA:37059"/>
        <dbReference type="Rhea" id="RHEA-COMP:10162"/>
        <dbReference type="Rhea" id="RHEA-COMP:10163"/>
        <dbReference type="ChEBI" id="CHEBI:15378"/>
        <dbReference type="ChEBI" id="CHEBI:73682"/>
        <dbReference type="ChEBI" id="CHEBI:74411"/>
        <dbReference type="ChEBI" id="CHEBI:74418"/>
        <dbReference type="ChEBI" id="CHEBI:456215"/>
        <dbReference type="EC" id="2.3.1.234"/>
    </reaction>
</comment>
<comment type="cofactor">
    <cofactor evidence="1">
        <name>Fe(2+)</name>
        <dbReference type="ChEBI" id="CHEBI:29033"/>
    </cofactor>
    <text evidence="1">Binds 1 Fe(2+) ion per subunit.</text>
</comment>
<comment type="subcellular location">
    <subcellularLocation>
        <location evidence="1">Cytoplasm</location>
    </subcellularLocation>
</comment>
<comment type="similarity">
    <text evidence="1">Belongs to the KAE1 / TsaD family.</text>
</comment>
<keyword id="KW-0012">Acyltransferase</keyword>
<keyword id="KW-0963">Cytoplasm</keyword>
<keyword id="KW-0408">Iron</keyword>
<keyword id="KW-0479">Metal-binding</keyword>
<keyword id="KW-1185">Reference proteome</keyword>
<keyword id="KW-0808">Transferase</keyword>
<keyword id="KW-0819">tRNA processing</keyword>
<dbReference type="EC" id="2.3.1.234" evidence="1"/>
<dbReference type="EMBL" id="AM180252">
    <property type="protein sequence ID" value="CAJ54424.1"/>
    <property type="molecule type" value="Genomic_DNA"/>
</dbReference>
<dbReference type="RefSeq" id="WP_011526453.1">
    <property type="nucleotide sequence ID" value="NC_008011.1"/>
</dbReference>
<dbReference type="SMR" id="Q1MRF2"/>
<dbReference type="STRING" id="363253.LI0368"/>
<dbReference type="KEGG" id="lip:LI0368"/>
<dbReference type="eggNOG" id="COG0533">
    <property type="taxonomic scope" value="Bacteria"/>
</dbReference>
<dbReference type="HOGENOM" id="CLU_023208_0_2_7"/>
<dbReference type="OrthoDB" id="9806197at2"/>
<dbReference type="Proteomes" id="UP000002430">
    <property type="component" value="Chromosome"/>
</dbReference>
<dbReference type="GO" id="GO:0005737">
    <property type="term" value="C:cytoplasm"/>
    <property type="evidence" value="ECO:0007669"/>
    <property type="project" value="UniProtKB-SubCell"/>
</dbReference>
<dbReference type="GO" id="GO:0005506">
    <property type="term" value="F:iron ion binding"/>
    <property type="evidence" value="ECO:0007669"/>
    <property type="project" value="UniProtKB-UniRule"/>
</dbReference>
<dbReference type="GO" id="GO:0061711">
    <property type="term" value="F:N(6)-L-threonylcarbamoyladenine synthase activity"/>
    <property type="evidence" value="ECO:0007669"/>
    <property type="project" value="UniProtKB-EC"/>
</dbReference>
<dbReference type="GO" id="GO:0002949">
    <property type="term" value="P:tRNA threonylcarbamoyladenosine modification"/>
    <property type="evidence" value="ECO:0007669"/>
    <property type="project" value="UniProtKB-UniRule"/>
</dbReference>
<dbReference type="FunFam" id="3.30.420.40:FF:000012">
    <property type="entry name" value="tRNA N6-adenosine threonylcarbamoyltransferase"/>
    <property type="match status" value="1"/>
</dbReference>
<dbReference type="Gene3D" id="3.30.420.40">
    <property type="match status" value="2"/>
</dbReference>
<dbReference type="HAMAP" id="MF_01445">
    <property type="entry name" value="TsaD"/>
    <property type="match status" value="1"/>
</dbReference>
<dbReference type="InterPro" id="IPR043129">
    <property type="entry name" value="ATPase_NBD"/>
</dbReference>
<dbReference type="InterPro" id="IPR000905">
    <property type="entry name" value="Gcp-like_dom"/>
</dbReference>
<dbReference type="InterPro" id="IPR017861">
    <property type="entry name" value="KAE1/TsaD"/>
</dbReference>
<dbReference type="InterPro" id="IPR022450">
    <property type="entry name" value="TsaD"/>
</dbReference>
<dbReference type="NCBIfam" id="TIGR00329">
    <property type="entry name" value="gcp_kae1"/>
    <property type="match status" value="1"/>
</dbReference>
<dbReference type="NCBIfam" id="TIGR03723">
    <property type="entry name" value="T6A_TsaD_YgjD"/>
    <property type="match status" value="1"/>
</dbReference>
<dbReference type="PANTHER" id="PTHR11735">
    <property type="entry name" value="TRNA N6-ADENOSINE THREONYLCARBAMOYLTRANSFERASE"/>
    <property type="match status" value="1"/>
</dbReference>
<dbReference type="PANTHER" id="PTHR11735:SF6">
    <property type="entry name" value="TRNA N6-ADENOSINE THREONYLCARBAMOYLTRANSFERASE, MITOCHONDRIAL"/>
    <property type="match status" value="1"/>
</dbReference>
<dbReference type="Pfam" id="PF00814">
    <property type="entry name" value="TsaD"/>
    <property type="match status" value="1"/>
</dbReference>
<dbReference type="PRINTS" id="PR00789">
    <property type="entry name" value="OSIALOPTASE"/>
</dbReference>
<dbReference type="SUPFAM" id="SSF53067">
    <property type="entry name" value="Actin-like ATPase domain"/>
    <property type="match status" value="1"/>
</dbReference>
<sequence length="355" mass="38629">MLCLGIETSCDETAVALVENGKCIGSILGTQAPLHALFGGVVPELASREHYRCLGPLYDKLMEDAKVTLADLDVIAVTRGPGLLGALLVGLAFAKGLALASGKTLIGINHLHAHLLVAAIEEPIEYPALGLLVSGGHTHIYKIDAPDIFILLARTLDDAAGEACDKFAKMLGLPYPGGVIIDKLAQQGIPDPYLFPRPYIHNSELDFSFSGLKTSAAMYLKQYPQLIEEGQRYCSNNSKVAIKEELYNVCSSYLLAISETLYIKMERALQKYTNEIKTIIVAGGLAANSFVRQAMHNLAINYNKKILLPEQKLCTDNAVMIAYYGELLAEKGYCHRLDLSAIPRGQHIPDDMVKV</sequence>